<keyword id="KW-0093">Biotin biosynthesis</keyword>
<keyword id="KW-0663">Pyridoxal phosphate</keyword>
<keyword id="KW-0808">Transferase</keyword>
<accession>Q1BT36</accession>
<name>BIOF_BURO1</name>
<gene>
    <name evidence="1" type="primary">bioF</name>
    <name type="ordered locus">Bcen_2318</name>
</gene>
<feature type="chain" id="PRO_0000380928" description="8-amino-7-oxononanoate synthase">
    <location>
        <begin position="1"/>
        <end position="406"/>
    </location>
</feature>
<feature type="binding site" evidence="1">
    <location>
        <position position="21"/>
    </location>
    <ligand>
        <name>substrate</name>
    </ligand>
</feature>
<feature type="binding site" evidence="1">
    <location>
        <begin position="112"/>
        <end position="113"/>
    </location>
    <ligand>
        <name>pyridoxal 5'-phosphate</name>
        <dbReference type="ChEBI" id="CHEBI:597326"/>
    </ligand>
</feature>
<feature type="binding site" evidence="1">
    <location>
        <position position="137"/>
    </location>
    <ligand>
        <name>substrate</name>
    </ligand>
</feature>
<feature type="binding site" evidence="1">
    <location>
        <position position="183"/>
    </location>
    <ligand>
        <name>pyridoxal 5'-phosphate</name>
        <dbReference type="ChEBI" id="CHEBI:597326"/>
    </ligand>
</feature>
<feature type="binding site" evidence="1">
    <location>
        <position position="211"/>
    </location>
    <ligand>
        <name>pyridoxal 5'-phosphate</name>
        <dbReference type="ChEBI" id="CHEBI:597326"/>
    </ligand>
</feature>
<feature type="binding site" evidence="1">
    <location>
        <position position="239"/>
    </location>
    <ligand>
        <name>pyridoxal 5'-phosphate</name>
        <dbReference type="ChEBI" id="CHEBI:597326"/>
    </ligand>
</feature>
<feature type="binding site" evidence="1">
    <location>
        <position position="358"/>
    </location>
    <ligand>
        <name>substrate</name>
    </ligand>
</feature>
<feature type="modified residue" description="N6-(pyridoxal phosphate)lysine" evidence="1">
    <location>
        <position position="242"/>
    </location>
</feature>
<proteinExistence type="inferred from homology"/>
<sequence>MSLLDTLQRGLADLDAQGLRRVRRIADTACDARMIVNRREIVGFASNDYLGLAAHPALVAAFAEGAQRYGAGSGGSHLLGGHSRAHARLEDELAGFAGGFSDAPRALYFSTGYMANLAAMTALAGKGATIFSDALNHASLIDGMRLSRANVQVYPHADTAALAALLDASEAETKLIVSDTVFSMDGDIAPLAELVALAERHGAWLVIDDAHGFGVLGPQGRGALAAAALRSPHLVYVGTLGKAAGVAGAFVIAHETVIEWLIQRARSYIFTTAAPPAVAHAVSASLKVIAGDEGDARRAHLAALIERTRALLRNTRWQPVDSHTAVQPLVIGSNDATLAAMRALDAHGLWVPAIRPPTVPAGTSRLRVSLSAAHSFDDLARLEAALIEASEAAAASVGAARQEAAA</sequence>
<protein>
    <recommendedName>
        <fullName evidence="1">8-amino-7-oxononanoate synthase</fullName>
        <shortName evidence="1">AONS</shortName>
        <ecNumber evidence="1">2.3.1.47</ecNumber>
    </recommendedName>
    <alternativeName>
        <fullName evidence="1">7-keto-8-amino-pelargonic acid synthase</fullName>
        <shortName evidence="1">7-KAP synthase</shortName>
        <shortName evidence="1">KAPA synthase</shortName>
    </alternativeName>
    <alternativeName>
        <fullName evidence="1">8-amino-7-ketopelargonate synthase</fullName>
    </alternativeName>
</protein>
<reference key="1">
    <citation type="submission" date="2006-05" db="EMBL/GenBank/DDBJ databases">
        <title>Complete sequence of chromosome 1 of Burkholderia cenocepacia AU 1054.</title>
        <authorList>
            <consortium name="US DOE Joint Genome Institute"/>
            <person name="Copeland A."/>
            <person name="Lucas S."/>
            <person name="Lapidus A."/>
            <person name="Barry K."/>
            <person name="Detter J.C."/>
            <person name="Glavina del Rio T."/>
            <person name="Hammon N."/>
            <person name="Israni S."/>
            <person name="Dalin E."/>
            <person name="Tice H."/>
            <person name="Pitluck S."/>
            <person name="Chain P."/>
            <person name="Malfatti S."/>
            <person name="Shin M."/>
            <person name="Vergez L."/>
            <person name="Schmutz J."/>
            <person name="Larimer F."/>
            <person name="Land M."/>
            <person name="Hauser L."/>
            <person name="Kyrpides N."/>
            <person name="Lykidis A."/>
            <person name="LiPuma J.J."/>
            <person name="Konstantinidis K."/>
            <person name="Tiedje J.M."/>
            <person name="Richardson P."/>
        </authorList>
    </citation>
    <scope>NUCLEOTIDE SEQUENCE [LARGE SCALE GENOMIC DNA]</scope>
    <source>
        <strain>AU 1054</strain>
    </source>
</reference>
<comment type="function">
    <text evidence="1">Catalyzes the decarboxylative condensation of pimeloyl-[acyl-carrier protein] and L-alanine to produce 8-amino-7-oxononanoate (AON), [acyl-carrier protein], and carbon dioxide.</text>
</comment>
<comment type="catalytic activity">
    <reaction evidence="1">
        <text>6-carboxyhexanoyl-[ACP] + L-alanine + H(+) = (8S)-8-amino-7-oxononanoate + holo-[ACP] + CO2</text>
        <dbReference type="Rhea" id="RHEA:42288"/>
        <dbReference type="Rhea" id="RHEA-COMP:9685"/>
        <dbReference type="Rhea" id="RHEA-COMP:9955"/>
        <dbReference type="ChEBI" id="CHEBI:15378"/>
        <dbReference type="ChEBI" id="CHEBI:16526"/>
        <dbReference type="ChEBI" id="CHEBI:57972"/>
        <dbReference type="ChEBI" id="CHEBI:64479"/>
        <dbReference type="ChEBI" id="CHEBI:78846"/>
        <dbReference type="ChEBI" id="CHEBI:149468"/>
        <dbReference type="EC" id="2.3.1.47"/>
    </reaction>
</comment>
<comment type="cofactor">
    <cofactor evidence="1">
        <name>pyridoxal 5'-phosphate</name>
        <dbReference type="ChEBI" id="CHEBI:597326"/>
    </cofactor>
</comment>
<comment type="pathway">
    <text evidence="1">Cofactor biosynthesis; biotin biosynthesis.</text>
</comment>
<comment type="subunit">
    <text evidence="1">Homodimer.</text>
</comment>
<comment type="similarity">
    <text evidence="1">Belongs to the class-II pyridoxal-phosphate-dependent aminotransferase family. BioF subfamily.</text>
</comment>
<dbReference type="EC" id="2.3.1.47" evidence="1"/>
<dbReference type="EMBL" id="CP000378">
    <property type="protein sequence ID" value="ABF77219.1"/>
    <property type="molecule type" value="Genomic_DNA"/>
</dbReference>
<dbReference type="SMR" id="Q1BT36"/>
<dbReference type="HOGENOM" id="CLU_015846_11_2_4"/>
<dbReference type="UniPathway" id="UPA00078"/>
<dbReference type="GO" id="GO:0008710">
    <property type="term" value="F:8-amino-7-oxononanoate synthase activity"/>
    <property type="evidence" value="ECO:0007669"/>
    <property type="project" value="UniProtKB-UniRule"/>
</dbReference>
<dbReference type="GO" id="GO:0030170">
    <property type="term" value="F:pyridoxal phosphate binding"/>
    <property type="evidence" value="ECO:0007669"/>
    <property type="project" value="UniProtKB-UniRule"/>
</dbReference>
<dbReference type="GO" id="GO:0009102">
    <property type="term" value="P:biotin biosynthetic process"/>
    <property type="evidence" value="ECO:0007669"/>
    <property type="project" value="UniProtKB-UniRule"/>
</dbReference>
<dbReference type="Gene3D" id="3.90.1150.10">
    <property type="entry name" value="Aspartate Aminotransferase, domain 1"/>
    <property type="match status" value="1"/>
</dbReference>
<dbReference type="Gene3D" id="3.40.640.10">
    <property type="entry name" value="Type I PLP-dependent aspartate aminotransferase-like (Major domain)"/>
    <property type="match status" value="1"/>
</dbReference>
<dbReference type="HAMAP" id="MF_01693">
    <property type="entry name" value="BioF_aminotrans_2"/>
    <property type="match status" value="1"/>
</dbReference>
<dbReference type="InterPro" id="IPR004839">
    <property type="entry name" value="Aminotransferase_I/II_large"/>
</dbReference>
<dbReference type="InterPro" id="IPR050087">
    <property type="entry name" value="AON_synthase_class-II"/>
</dbReference>
<dbReference type="InterPro" id="IPR004723">
    <property type="entry name" value="AONS_Archaea/Proteobacteria"/>
</dbReference>
<dbReference type="InterPro" id="IPR022834">
    <property type="entry name" value="AONS_Proteobacteria"/>
</dbReference>
<dbReference type="InterPro" id="IPR015424">
    <property type="entry name" value="PyrdxlP-dep_Trfase"/>
</dbReference>
<dbReference type="InterPro" id="IPR015421">
    <property type="entry name" value="PyrdxlP-dep_Trfase_major"/>
</dbReference>
<dbReference type="InterPro" id="IPR015422">
    <property type="entry name" value="PyrdxlP-dep_Trfase_small"/>
</dbReference>
<dbReference type="NCBIfam" id="TIGR00858">
    <property type="entry name" value="bioF"/>
    <property type="match status" value="1"/>
</dbReference>
<dbReference type="PANTHER" id="PTHR13693:SF100">
    <property type="entry name" value="8-AMINO-7-OXONONANOATE SYNTHASE"/>
    <property type="match status" value="1"/>
</dbReference>
<dbReference type="PANTHER" id="PTHR13693">
    <property type="entry name" value="CLASS II AMINOTRANSFERASE/8-AMINO-7-OXONONANOATE SYNTHASE"/>
    <property type="match status" value="1"/>
</dbReference>
<dbReference type="Pfam" id="PF00155">
    <property type="entry name" value="Aminotran_1_2"/>
    <property type="match status" value="1"/>
</dbReference>
<dbReference type="SUPFAM" id="SSF53383">
    <property type="entry name" value="PLP-dependent transferases"/>
    <property type="match status" value="1"/>
</dbReference>
<evidence type="ECO:0000255" key="1">
    <source>
        <dbReference type="HAMAP-Rule" id="MF_01693"/>
    </source>
</evidence>
<organism>
    <name type="scientific">Burkholderia orbicola (strain AU 1054)</name>
    <dbReference type="NCBI Taxonomy" id="331271"/>
    <lineage>
        <taxon>Bacteria</taxon>
        <taxon>Pseudomonadati</taxon>
        <taxon>Pseudomonadota</taxon>
        <taxon>Betaproteobacteria</taxon>
        <taxon>Burkholderiales</taxon>
        <taxon>Burkholderiaceae</taxon>
        <taxon>Burkholderia</taxon>
        <taxon>Burkholderia cepacia complex</taxon>
        <taxon>Burkholderia orbicola</taxon>
    </lineage>
</organism>